<protein>
    <recommendedName>
        <fullName evidence="1">Probable porphobilinogen deaminase</fullName>
        <shortName evidence="1">PBG</shortName>
        <ecNumber evidence="1">2.5.1.61</ecNumber>
    </recommendedName>
    <alternativeName>
        <fullName evidence="1">Hydroxymethylbilane synthase</fullName>
        <shortName evidence="1">HMBS</shortName>
    </alternativeName>
    <alternativeName>
        <fullName evidence="1">Pre-uroporphyrinogen synthase</fullName>
    </alternativeName>
</protein>
<comment type="function">
    <text evidence="1">Tetrapolymerization of the monopyrrole PBG into the hydroxymethylbilane pre-uroporphyrinogen in several discrete steps.</text>
</comment>
<comment type="catalytic activity">
    <reaction evidence="1">
        <text>4 porphobilinogen + H2O = hydroxymethylbilane + 4 NH4(+)</text>
        <dbReference type="Rhea" id="RHEA:13185"/>
        <dbReference type="ChEBI" id="CHEBI:15377"/>
        <dbReference type="ChEBI" id="CHEBI:28938"/>
        <dbReference type="ChEBI" id="CHEBI:57845"/>
        <dbReference type="ChEBI" id="CHEBI:58126"/>
        <dbReference type="EC" id="2.5.1.61"/>
    </reaction>
</comment>
<comment type="cofactor">
    <cofactor evidence="1">
        <name>dipyrromethane</name>
        <dbReference type="ChEBI" id="CHEBI:60342"/>
    </cofactor>
    <text evidence="1">Binds 1 dipyrromethane group covalently.</text>
</comment>
<comment type="pathway">
    <text evidence="1">Porphyrin-containing compound metabolism; protoporphyrin-IX biosynthesis; coproporphyrinogen-III from 5-aminolevulinate: step 2/4.</text>
</comment>
<comment type="miscellaneous">
    <text evidence="1">The porphobilinogen subunits are added to the dipyrromethane group.</text>
</comment>
<comment type="similarity">
    <text evidence="1">Belongs to the HMBS family.</text>
</comment>
<accession>Q6L2G8</accession>
<name>HEM3_PICTO</name>
<keyword id="KW-0627">Porphyrin biosynthesis</keyword>
<keyword id="KW-0808">Transferase</keyword>
<evidence type="ECO:0000255" key="1">
    <source>
        <dbReference type="HAMAP-Rule" id="MF_00260"/>
    </source>
</evidence>
<feature type="chain" id="PRO_0000143028" description="Probable porphobilinogen deaminase">
    <location>
        <begin position="1"/>
        <end position="282"/>
    </location>
</feature>
<feature type="modified residue" description="S-(dipyrrolylmethanemethyl)cysteine" evidence="1">
    <location>
        <position position="233"/>
    </location>
</feature>
<organism>
    <name type="scientific">Picrophilus torridus (strain ATCC 700027 / DSM 9790 / JCM 10055 / NBRC 100828 / KAW 2/3)</name>
    <dbReference type="NCBI Taxonomy" id="1122961"/>
    <lineage>
        <taxon>Archaea</taxon>
        <taxon>Methanobacteriati</taxon>
        <taxon>Thermoplasmatota</taxon>
        <taxon>Thermoplasmata</taxon>
        <taxon>Thermoplasmatales</taxon>
        <taxon>Picrophilaceae</taxon>
        <taxon>Picrophilus</taxon>
    </lineage>
</organism>
<proteinExistence type="inferred from homology"/>
<dbReference type="EC" id="2.5.1.61" evidence="1"/>
<dbReference type="EMBL" id="AE017261">
    <property type="protein sequence ID" value="AAT42834.1"/>
    <property type="molecule type" value="Genomic_DNA"/>
</dbReference>
<dbReference type="RefSeq" id="WP_011177050.1">
    <property type="nucleotide sequence ID" value="NC_005877.1"/>
</dbReference>
<dbReference type="SMR" id="Q6L2G8"/>
<dbReference type="FunCoup" id="Q6L2G8">
    <property type="interactions" value="211"/>
</dbReference>
<dbReference type="STRING" id="263820.PTO0249"/>
<dbReference type="PaxDb" id="263820-PTO0249"/>
<dbReference type="GeneID" id="2844156"/>
<dbReference type="KEGG" id="pto:PTO0249"/>
<dbReference type="PATRIC" id="fig|263820.9.peg.267"/>
<dbReference type="eggNOG" id="arCOG04299">
    <property type="taxonomic scope" value="Archaea"/>
</dbReference>
<dbReference type="HOGENOM" id="CLU_019704_1_0_2"/>
<dbReference type="InParanoid" id="Q6L2G8"/>
<dbReference type="OrthoDB" id="8042at2157"/>
<dbReference type="UniPathway" id="UPA00251">
    <property type="reaction ID" value="UER00319"/>
</dbReference>
<dbReference type="Proteomes" id="UP000000438">
    <property type="component" value="Chromosome"/>
</dbReference>
<dbReference type="GO" id="GO:0005737">
    <property type="term" value="C:cytoplasm"/>
    <property type="evidence" value="ECO:0007669"/>
    <property type="project" value="TreeGrafter"/>
</dbReference>
<dbReference type="GO" id="GO:0004418">
    <property type="term" value="F:hydroxymethylbilane synthase activity"/>
    <property type="evidence" value="ECO:0007669"/>
    <property type="project" value="UniProtKB-UniRule"/>
</dbReference>
<dbReference type="GO" id="GO:0006782">
    <property type="term" value="P:protoporphyrinogen IX biosynthetic process"/>
    <property type="evidence" value="ECO:0007669"/>
    <property type="project" value="UniProtKB-UniRule"/>
</dbReference>
<dbReference type="FunFam" id="3.40.190.10:FF:000005">
    <property type="entry name" value="Porphobilinogen deaminase"/>
    <property type="match status" value="1"/>
</dbReference>
<dbReference type="Gene3D" id="3.40.190.10">
    <property type="entry name" value="Periplasmic binding protein-like II"/>
    <property type="match status" value="2"/>
</dbReference>
<dbReference type="HAMAP" id="MF_00260">
    <property type="entry name" value="Porphobil_deam"/>
    <property type="match status" value="1"/>
</dbReference>
<dbReference type="InterPro" id="IPR000860">
    <property type="entry name" value="HemC"/>
</dbReference>
<dbReference type="InterPro" id="IPR022417">
    <property type="entry name" value="Porphobilin_deaminase_N"/>
</dbReference>
<dbReference type="InterPro" id="IPR036803">
    <property type="entry name" value="Porphobilinogen_deaminase_C_sf"/>
</dbReference>
<dbReference type="NCBIfam" id="TIGR00212">
    <property type="entry name" value="hemC"/>
    <property type="match status" value="1"/>
</dbReference>
<dbReference type="PANTHER" id="PTHR11557">
    <property type="entry name" value="PORPHOBILINOGEN DEAMINASE"/>
    <property type="match status" value="1"/>
</dbReference>
<dbReference type="PANTHER" id="PTHR11557:SF0">
    <property type="entry name" value="PORPHOBILINOGEN DEAMINASE"/>
    <property type="match status" value="1"/>
</dbReference>
<dbReference type="Pfam" id="PF01379">
    <property type="entry name" value="Porphobil_deam"/>
    <property type="match status" value="1"/>
</dbReference>
<dbReference type="PIRSF" id="PIRSF001438">
    <property type="entry name" value="4pyrrol_synth_OHMeBilane_synth"/>
    <property type="match status" value="1"/>
</dbReference>
<dbReference type="PRINTS" id="PR00151">
    <property type="entry name" value="PORPHBDMNASE"/>
</dbReference>
<dbReference type="SUPFAM" id="SSF53850">
    <property type="entry name" value="Periplasmic binding protein-like II"/>
    <property type="match status" value="1"/>
</dbReference>
<dbReference type="SUPFAM" id="SSF54782">
    <property type="entry name" value="Porphobilinogen deaminase (hydroxymethylbilane synthase), C-terminal domain"/>
    <property type="match status" value="1"/>
</dbReference>
<sequence>MHIRIGTRSSKLAMIQAMMVKDRLDSLGIETEVKGFTSKGDINLDSPLYSIGGTGVFVDDLNRMILKNEIDIAVHSAKDIPSFIDDSLEISAVLKRDDPRDVLISQHSLNDLEASSVIGTSSLRRIKELKTLRNDILIKDLRGNIDTRLKKLDNGDYDGIIMAKAAYDRMRINRRHFILNYDDFVPAPNQGIIAIISKKDSEINDVLKKINDDETYNDMKAERLILSGLNLGCSKPVGIYAHKNRIFMRFYSLKNDDYKDIVMDYNNIDLEFIRSEIHDYGY</sequence>
<gene>
    <name evidence="1" type="primary">hemC</name>
    <name type="ordered locus">PTO0249</name>
</gene>
<reference key="1">
    <citation type="journal article" date="2004" name="Proc. Natl. Acad. Sci. U.S.A.">
        <title>Genome sequence of Picrophilus torridus and its implications for life around pH 0.</title>
        <authorList>
            <person name="Fuetterer O."/>
            <person name="Angelov A."/>
            <person name="Liesegang H."/>
            <person name="Gottschalk G."/>
            <person name="Schleper C."/>
            <person name="Schepers B."/>
            <person name="Dock C."/>
            <person name="Antranikian G."/>
            <person name="Liebl W."/>
        </authorList>
    </citation>
    <scope>NUCLEOTIDE SEQUENCE [LARGE SCALE GENOMIC DNA]</scope>
    <source>
        <strain>ATCC 700027 / DSM 9790 / JCM 10055 / NBRC 100828 / KAW 2/3</strain>
    </source>
</reference>